<accession>Q8PW43</accession>
<gene>
    <name evidence="1" type="primary">rpo10</name>
    <name evidence="1" type="synonym">rpoN</name>
    <name type="ordered locus">MM_1758</name>
</gene>
<proteinExistence type="inferred from homology"/>
<dbReference type="EC" id="2.7.7.6" evidence="1"/>
<dbReference type="EMBL" id="AE008384">
    <property type="protein sequence ID" value="AAM31454.1"/>
    <property type="molecule type" value="Genomic_DNA"/>
</dbReference>
<dbReference type="RefSeq" id="WP_011033698.1">
    <property type="nucleotide sequence ID" value="NC_003901.1"/>
</dbReference>
<dbReference type="SMR" id="Q8PW43"/>
<dbReference type="KEGG" id="mma:MM_1758"/>
<dbReference type="PATRIC" id="fig|192952.21.peg.2034"/>
<dbReference type="eggNOG" id="arCOG04244">
    <property type="taxonomic scope" value="Archaea"/>
</dbReference>
<dbReference type="HOGENOM" id="CLU_143122_2_1_2"/>
<dbReference type="Proteomes" id="UP000000595">
    <property type="component" value="Chromosome"/>
</dbReference>
<dbReference type="GO" id="GO:0005737">
    <property type="term" value="C:cytoplasm"/>
    <property type="evidence" value="ECO:0007669"/>
    <property type="project" value="UniProtKB-SubCell"/>
</dbReference>
<dbReference type="GO" id="GO:0000428">
    <property type="term" value="C:DNA-directed RNA polymerase complex"/>
    <property type="evidence" value="ECO:0007669"/>
    <property type="project" value="UniProtKB-KW"/>
</dbReference>
<dbReference type="GO" id="GO:0003677">
    <property type="term" value="F:DNA binding"/>
    <property type="evidence" value="ECO:0007669"/>
    <property type="project" value="InterPro"/>
</dbReference>
<dbReference type="GO" id="GO:0003899">
    <property type="term" value="F:DNA-directed RNA polymerase activity"/>
    <property type="evidence" value="ECO:0007669"/>
    <property type="project" value="UniProtKB-UniRule"/>
</dbReference>
<dbReference type="GO" id="GO:0008270">
    <property type="term" value="F:zinc ion binding"/>
    <property type="evidence" value="ECO:0007669"/>
    <property type="project" value="UniProtKB-UniRule"/>
</dbReference>
<dbReference type="GO" id="GO:0006351">
    <property type="term" value="P:DNA-templated transcription"/>
    <property type="evidence" value="ECO:0007669"/>
    <property type="project" value="UniProtKB-UniRule"/>
</dbReference>
<dbReference type="FunFam" id="1.10.10.60:FF:000335">
    <property type="entry name" value="DNA-directed RNA polymerase subunit N, putative"/>
    <property type="match status" value="1"/>
</dbReference>
<dbReference type="Gene3D" id="1.10.10.60">
    <property type="entry name" value="Homeodomain-like"/>
    <property type="match status" value="1"/>
</dbReference>
<dbReference type="HAMAP" id="MF_00250">
    <property type="entry name" value="RNApol_arch_Rpo10"/>
    <property type="match status" value="1"/>
</dbReference>
<dbReference type="InterPro" id="IPR023580">
    <property type="entry name" value="RNA_pol_su_RPB10"/>
</dbReference>
<dbReference type="InterPro" id="IPR020789">
    <property type="entry name" value="RNA_pol_suN_Zn-BS"/>
</dbReference>
<dbReference type="InterPro" id="IPR000268">
    <property type="entry name" value="RPABC5/Rpb10"/>
</dbReference>
<dbReference type="NCBIfam" id="NF003089">
    <property type="entry name" value="PRK04016.1"/>
    <property type="match status" value="1"/>
</dbReference>
<dbReference type="PANTHER" id="PTHR23431:SF3">
    <property type="entry name" value="DNA-DIRECTED RNA POLYMERASES I, II, AND III SUBUNIT RPABC5"/>
    <property type="match status" value="1"/>
</dbReference>
<dbReference type="PANTHER" id="PTHR23431">
    <property type="entry name" value="DNA-DIRECTED RNA POLYMERASES I, II, AND III SUBUNIT RPABC5 FAMILY MEMBER"/>
    <property type="match status" value="1"/>
</dbReference>
<dbReference type="Pfam" id="PF01194">
    <property type="entry name" value="RNA_pol_N"/>
    <property type="match status" value="1"/>
</dbReference>
<dbReference type="PIRSF" id="PIRSF005653">
    <property type="entry name" value="RNA_pol_N/8_sub"/>
    <property type="match status" value="1"/>
</dbReference>
<dbReference type="SUPFAM" id="SSF46924">
    <property type="entry name" value="RNA polymerase subunit RPB10"/>
    <property type="match status" value="1"/>
</dbReference>
<dbReference type="PROSITE" id="PS01112">
    <property type="entry name" value="RNA_POL_N_8KD"/>
    <property type="match status" value="1"/>
</dbReference>
<comment type="function">
    <text evidence="1">DNA-dependent RNA polymerase (RNAP) catalyzes the transcription of DNA into RNA using the four ribonucleoside triphosphates as substrates.</text>
</comment>
<comment type="catalytic activity">
    <reaction evidence="1">
        <text>RNA(n) + a ribonucleoside 5'-triphosphate = RNA(n+1) + diphosphate</text>
        <dbReference type="Rhea" id="RHEA:21248"/>
        <dbReference type="Rhea" id="RHEA-COMP:14527"/>
        <dbReference type="Rhea" id="RHEA-COMP:17342"/>
        <dbReference type="ChEBI" id="CHEBI:33019"/>
        <dbReference type="ChEBI" id="CHEBI:61557"/>
        <dbReference type="ChEBI" id="CHEBI:140395"/>
        <dbReference type="EC" id="2.7.7.6"/>
    </reaction>
</comment>
<comment type="cofactor">
    <cofactor evidence="1">
        <name>Zn(2+)</name>
        <dbReference type="ChEBI" id="CHEBI:29105"/>
    </cofactor>
    <text evidence="1">Binds 1 zinc ion.</text>
</comment>
<comment type="subunit">
    <text evidence="1">Part of the RNA polymerase complex.</text>
</comment>
<comment type="subcellular location">
    <subcellularLocation>
        <location evidence="1">Cytoplasm</location>
    </subcellularLocation>
</comment>
<comment type="similarity">
    <text evidence="1">Belongs to the archaeal Rpo10/eukaryotic RPB10 RNA polymerase subunit family.</text>
</comment>
<protein>
    <recommendedName>
        <fullName evidence="1">DNA-directed RNA polymerase subunit Rpo10</fullName>
        <ecNumber evidence="1">2.7.7.6</ecNumber>
    </recommendedName>
    <alternativeName>
        <fullName evidence="1">DNA-directed RNA polymerase subunit N</fullName>
    </alternativeName>
</protein>
<evidence type="ECO:0000255" key="1">
    <source>
        <dbReference type="HAMAP-Rule" id="MF_00250"/>
    </source>
</evidence>
<sequence>MIPVRCFSCGKVISNYWDEYKRRVTDGEDAAAVLDDLGITRYCCRRMFLSHVELIDVLSPYQ</sequence>
<feature type="chain" id="PRO_0000121351" description="DNA-directed RNA polymerase subunit Rpo10">
    <location>
        <begin position="1"/>
        <end position="62"/>
    </location>
</feature>
<feature type="binding site" evidence="1">
    <location>
        <position position="6"/>
    </location>
    <ligand>
        <name>Zn(2+)</name>
        <dbReference type="ChEBI" id="CHEBI:29105"/>
    </ligand>
</feature>
<feature type="binding site" evidence="1">
    <location>
        <position position="9"/>
    </location>
    <ligand>
        <name>Zn(2+)</name>
        <dbReference type="ChEBI" id="CHEBI:29105"/>
    </ligand>
</feature>
<feature type="binding site" evidence="1">
    <location>
        <position position="43"/>
    </location>
    <ligand>
        <name>Zn(2+)</name>
        <dbReference type="ChEBI" id="CHEBI:29105"/>
    </ligand>
</feature>
<feature type="binding site" evidence="1">
    <location>
        <position position="44"/>
    </location>
    <ligand>
        <name>Zn(2+)</name>
        <dbReference type="ChEBI" id="CHEBI:29105"/>
    </ligand>
</feature>
<name>RPO10_METMA</name>
<organism>
    <name type="scientific">Methanosarcina mazei (strain ATCC BAA-159 / DSM 3647 / Goe1 / Go1 / JCM 11833 / OCM 88)</name>
    <name type="common">Methanosarcina frisia</name>
    <dbReference type="NCBI Taxonomy" id="192952"/>
    <lineage>
        <taxon>Archaea</taxon>
        <taxon>Methanobacteriati</taxon>
        <taxon>Methanobacteriota</taxon>
        <taxon>Stenosarchaea group</taxon>
        <taxon>Methanomicrobia</taxon>
        <taxon>Methanosarcinales</taxon>
        <taxon>Methanosarcinaceae</taxon>
        <taxon>Methanosarcina</taxon>
    </lineage>
</organism>
<reference key="1">
    <citation type="journal article" date="2002" name="J. Mol. Microbiol. Biotechnol.">
        <title>The genome of Methanosarcina mazei: evidence for lateral gene transfer between Bacteria and Archaea.</title>
        <authorList>
            <person name="Deppenmeier U."/>
            <person name="Johann A."/>
            <person name="Hartsch T."/>
            <person name="Merkl R."/>
            <person name="Schmitz R.A."/>
            <person name="Martinez-Arias R."/>
            <person name="Henne A."/>
            <person name="Wiezer A."/>
            <person name="Baeumer S."/>
            <person name="Jacobi C."/>
            <person name="Brueggemann H."/>
            <person name="Lienard T."/>
            <person name="Christmann A."/>
            <person name="Boemecke M."/>
            <person name="Steckel S."/>
            <person name="Bhattacharyya A."/>
            <person name="Lykidis A."/>
            <person name="Overbeek R."/>
            <person name="Klenk H.-P."/>
            <person name="Gunsalus R.P."/>
            <person name="Fritz H.-J."/>
            <person name="Gottschalk G."/>
        </authorList>
    </citation>
    <scope>NUCLEOTIDE SEQUENCE [LARGE SCALE GENOMIC DNA]</scope>
    <source>
        <strain>ATCC BAA-159 / DSM 3647 / Goe1 / Go1 / JCM 11833 / OCM 88</strain>
    </source>
</reference>
<keyword id="KW-0963">Cytoplasm</keyword>
<keyword id="KW-0240">DNA-directed RNA polymerase</keyword>
<keyword id="KW-0479">Metal-binding</keyword>
<keyword id="KW-0548">Nucleotidyltransferase</keyword>
<keyword id="KW-0804">Transcription</keyword>
<keyword id="KW-0808">Transferase</keyword>
<keyword id="KW-0862">Zinc</keyword>